<accession>Q55GT2</accession>
<comment type="subcellular location">
    <subcellularLocation>
        <location evidence="3">Membrane</location>
        <topology evidence="3">Multi-pass membrane protein</topology>
    </subcellularLocation>
</comment>
<name>Y9347_DICDI</name>
<protein>
    <recommendedName>
        <fullName>Putative transmembrane protein DDB_G0267530</fullName>
    </recommendedName>
</protein>
<sequence length="210" mass="23822">MGVEDQPQTQPQTQPQQQPQMGYQPQMGYQPQAQMGYQPQAAPMGYPQQPIYQQQPQMGYQPPMGYQPQVGYQQQPPQPVYQTYCHDDHQPLLHANVVVTTTQPTVIRKSNSNEETAAVIVFIIGFFFSIVWLGGFFFIKSKSKTARTFGILSVVFFFLVLVIVVIVVSVTVTAAEKIAEENKDYYYSTSTGYYSTTGYYSTTTSYTTYY</sequence>
<evidence type="ECO:0000255" key="1"/>
<evidence type="ECO:0000256" key="2">
    <source>
        <dbReference type="SAM" id="MobiDB-lite"/>
    </source>
</evidence>
<evidence type="ECO:0000305" key="3"/>
<gene>
    <name type="ORF">DDB_G0267530</name>
</gene>
<dbReference type="EMBL" id="AAFI02000003">
    <property type="protein sequence ID" value="EAL73218.1"/>
    <property type="molecule type" value="Genomic_DNA"/>
</dbReference>
<dbReference type="RefSeq" id="XP_647102.1">
    <property type="nucleotide sequence ID" value="XM_642010.1"/>
</dbReference>
<dbReference type="SMR" id="Q55GT2"/>
<dbReference type="PaxDb" id="44689-DDB0189347"/>
<dbReference type="EnsemblProtists" id="EAL73218">
    <property type="protein sequence ID" value="EAL73218"/>
    <property type="gene ID" value="DDB_G0267530"/>
</dbReference>
<dbReference type="GeneID" id="8615906"/>
<dbReference type="KEGG" id="ddi:DDB_G0267530"/>
<dbReference type="dictyBase" id="DDB_G0267530"/>
<dbReference type="VEuPathDB" id="AmoebaDB:DDB_G0267530"/>
<dbReference type="eggNOG" id="ENOG502T0QS">
    <property type="taxonomic scope" value="Eukaryota"/>
</dbReference>
<dbReference type="HOGENOM" id="CLU_1312166_0_0_1"/>
<dbReference type="InParanoid" id="Q55GT2"/>
<dbReference type="PRO" id="PR:Q55GT2"/>
<dbReference type="Proteomes" id="UP000002195">
    <property type="component" value="Chromosome 1"/>
</dbReference>
<dbReference type="GO" id="GO:0016020">
    <property type="term" value="C:membrane"/>
    <property type="evidence" value="ECO:0007669"/>
    <property type="project" value="UniProtKB-SubCell"/>
</dbReference>
<dbReference type="PANTHER" id="PTHR34078">
    <property type="entry name" value="EXPRESSED PROTEIN"/>
    <property type="match status" value="1"/>
</dbReference>
<dbReference type="PANTHER" id="PTHR34078:SF1">
    <property type="entry name" value="TRANSMEMBRANE PROTEIN DDB_G0267530-RELATED"/>
    <property type="match status" value="1"/>
</dbReference>
<organism>
    <name type="scientific">Dictyostelium discoideum</name>
    <name type="common">Social amoeba</name>
    <dbReference type="NCBI Taxonomy" id="44689"/>
    <lineage>
        <taxon>Eukaryota</taxon>
        <taxon>Amoebozoa</taxon>
        <taxon>Evosea</taxon>
        <taxon>Eumycetozoa</taxon>
        <taxon>Dictyostelia</taxon>
        <taxon>Dictyosteliales</taxon>
        <taxon>Dictyosteliaceae</taxon>
        <taxon>Dictyostelium</taxon>
    </lineage>
</organism>
<proteinExistence type="predicted"/>
<keyword id="KW-0472">Membrane</keyword>
<keyword id="KW-1185">Reference proteome</keyword>
<keyword id="KW-0812">Transmembrane</keyword>
<keyword id="KW-1133">Transmembrane helix</keyword>
<feature type="chain" id="PRO_0000348190" description="Putative transmembrane protein DDB_G0267530">
    <location>
        <begin position="1"/>
        <end position="210"/>
    </location>
</feature>
<feature type="transmembrane region" description="Helical" evidence="1">
    <location>
        <begin position="119"/>
        <end position="139"/>
    </location>
</feature>
<feature type="transmembrane region" description="Helical" evidence="1">
    <location>
        <begin position="148"/>
        <end position="168"/>
    </location>
</feature>
<feature type="region of interest" description="Disordered" evidence="2">
    <location>
        <begin position="1"/>
        <end position="40"/>
    </location>
</feature>
<reference key="1">
    <citation type="journal article" date="2005" name="Nature">
        <title>The genome of the social amoeba Dictyostelium discoideum.</title>
        <authorList>
            <person name="Eichinger L."/>
            <person name="Pachebat J.A."/>
            <person name="Gloeckner G."/>
            <person name="Rajandream M.A."/>
            <person name="Sucgang R."/>
            <person name="Berriman M."/>
            <person name="Song J."/>
            <person name="Olsen R."/>
            <person name="Szafranski K."/>
            <person name="Xu Q."/>
            <person name="Tunggal B."/>
            <person name="Kummerfeld S."/>
            <person name="Madera M."/>
            <person name="Konfortov B.A."/>
            <person name="Rivero F."/>
            <person name="Bankier A.T."/>
            <person name="Lehmann R."/>
            <person name="Hamlin N."/>
            <person name="Davies R."/>
            <person name="Gaudet P."/>
            <person name="Fey P."/>
            <person name="Pilcher K."/>
            <person name="Chen G."/>
            <person name="Saunders D."/>
            <person name="Sodergren E.J."/>
            <person name="Davis P."/>
            <person name="Kerhornou A."/>
            <person name="Nie X."/>
            <person name="Hall N."/>
            <person name="Anjard C."/>
            <person name="Hemphill L."/>
            <person name="Bason N."/>
            <person name="Farbrother P."/>
            <person name="Desany B."/>
            <person name="Just E."/>
            <person name="Morio T."/>
            <person name="Rost R."/>
            <person name="Churcher C.M."/>
            <person name="Cooper J."/>
            <person name="Haydock S."/>
            <person name="van Driessche N."/>
            <person name="Cronin A."/>
            <person name="Goodhead I."/>
            <person name="Muzny D.M."/>
            <person name="Mourier T."/>
            <person name="Pain A."/>
            <person name="Lu M."/>
            <person name="Harper D."/>
            <person name="Lindsay R."/>
            <person name="Hauser H."/>
            <person name="James K.D."/>
            <person name="Quiles M."/>
            <person name="Madan Babu M."/>
            <person name="Saito T."/>
            <person name="Buchrieser C."/>
            <person name="Wardroper A."/>
            <person name="Felder M."/>
            <person name="Thangavelu M."/>
            <person name="Johnson D."/>
            <person name="Knights A."/>
            <person name="Loulseged H."/>
            <person name="Mungall K.L."/>
            <person name="Oliver K."/>
            <person name="Price C."/>
            <person name="Quail M.A."/>
            <person name="Urushihara H."/>
            <person name="Hernandez J."/>
            <person name="Rabbinowitsch E."/>
            <person name="Steffen D."/>
            <person name="Sanders M."/>
            <person name="Ma J."/>
            <person name="Kohara Y."/>
            <person name="Sharp S."/>
            <person name="Simmonds M.N."/>
            <person name="Spiegler S."/>
            <person name="Tivey A."/>
            <person name="Sugano S."/>
            <person name="White B."/>
            <person name="Walker D."/>
            <person name="Woodward J.R."/>
            <person name="Winckler T."/>
            <person name="Tanaka Y."/>
            <person name="Shaulsky G."/>
            <person name="Schleicher M."/>
            <person name="Weinstock G.M."/>
            <person name="Rosenthal A."/>
            <person name="Cox E.C."/>
            <person name="Chisholm R.L."/>
            <person name="Gibbs R.A."/>
            <person name="Loomis W.F."/>
            <person name="Platzer M."/>
            <person name="Kay R.R."/>
            <person name="Williams J.G."/>
            <person name="Dear P.H."/>
            <person name="Noegel A.A."/>
            <person name="Barrell B.G."/>
            <person name="Kuspa A."/>
        </authorList>
    </citation>
    <scope>NUCLEOTIDE SEQUENCE [LARGE SCALE GENOMIC DNA]</scope>
    <source>
        <strain>AX4</strain>
    </source>
</reference>